<reference key="1">
    <citation type="journal article" date="2005" name="Proc. Natl. Acad. Sci. U.S.A.">
        <title>The psychrophilic lifestyle as revealed by the genome sequence of Colwellia psychrerythraea 34H through genomic and proteomic analyses.</title>
        <authorList>
            <person name="Methe B.A."/>
            <person name="Nelson K.E."/>
            <person name="Deming J.W."/>
            <person name="Momen B."/>
            <person name="Melamud E."/>
            <person name="Zhang X."/>
            <person name="Moult J."/>
            <person name="Madupu R."/>
            <person name="Nelson W.C."/>
            <person name="Dodson R.J."/>
            <person name="Brinkac L.M."/>
            <person name="Daugherty S.C."/>
            <person name="Durkin A.S."/>
            <person name="DeBoy R.T."/>
            <person name="Kolonay J.F."/>
            <person name="Sullivan S.A."/>
            <person name="Zhou L."/>
            <person name="Davidsen T.M."/>
            <person name="Wu M."/>
            <person name="Huston A.L."/>
            <person name="Lewis M."/>
            <person name="Weaver B."/>
            <person name="Weidman J.F."/>
            <person name="Khouri H."/>
            <person name="Utterback T.R."/>
            <person name="Feldblyum T.V."/>
            <person name="Fraser C.M."/>
        </authorList>
    </citation>
    <scope>NUCLEOTIDE SEQUENCE [LARGE SCALE GENOMIC DNA]</scope>
    <source>
        <strain>34H / ATCC BAA-681</strain>
    </source>
</reference>
<protein>
    <recommendedName>
        <fullName evidence="1">DNA replication and repair protein RecF</fullName>
    </recommendedName>
</protein>
<dbReference type="EMBL" id="CP000083">
    <property type="protein sequence ID" value="AAZ26772.1"/>
    <property type="molecule type" value="Genomic_DNA"/>
</dbReference>
<dbReference type="RefSeq" id="WP_011040893.1">
    <property type="nucleotide sequence ID" value="NC_003910.7"/>
</dbReference>
<dbReference type="SMR" id="Q48AS5"/>
<dbReference type="STRING" id="167879.CPS_0003"/>
<dbReference type="KEGG" id="cps:CPS_0003"/>
<dbReference type="HOGENOM" id="CLU_040267_0_0_6"/>
<dbReference type="Proteomes" id="UP000000547">
    <property type="component" value="Chromosome"/>
</dbReference>
<dbReference type="GO" id="GO:0005737">
    <property type="term" value="C:cytoplasm"/>
    <property type="evidence" value="ECO:0007669"/>
    <property type="project" value="UniProtKB-SubCell"/>
</dbReference>
<dbReference type="GO" id="GO:0005524">
    <property type="term" value="F:ATP binding"/>
    <property type="evidence" value="ECO:0007669"/>
    <property type="project" value="UniProtKB-UniRule"/>
</dbReference>
<dbReference type="GO" id="GO:0003697">
    <property type="term" value="F:single-stranded DNA binding"/>
    <property type="evidence" value="ECO:0007669"/>
    <property type="project" value="UniProtKB-UniRule"/>
</dbReference>
<dbReference type="GO" id="GO:0006260">
    <property type="term" value="P:DNA replication"/>
    <property type="evidence" value="ECO:0007669"/>
    <property type="project" value="UniProtKB-UniRule"/>
</dbReference>
<dbReference type="GO" id="GO:0000731">
    <property type="term" value="P:DNA synthesis involved in DNA repair"/>
    <property type="evidence" value="ECO:0007669"/>
    <property type="project" value="TreeGrafter"/>
</dbReference>
<dbReference type="GO" id="GO:0006302">
    <property type="term" value="P:double-strand break repair"/>
    <property type="evidence" value="ECO:0007669"/>
    <property type="project" value="TreeGrafter"/>
</dbReference>
<dbReference type="GO" id="GO:0009432">
    <property type="term" value="P:SOS response"/>
    <property type="evidence" value="ECO:0007669"/>
    <property type="project" value="UniProtKB-UniRule"/>
</dbReference>
<dbReference type="Gene3D" id="3.40.50.300">
    <property type="entry name" value="P-loop containing nucleotide triphosphate hydrolases"/>
    <property type="match status" value="1"/>
</dbReference>
<dbReference type="Gene3D" id="1.20.1050.90">
    <property type="entry name" value="RecF/RecN/SMC, N-terminal domain"/>
    <property type="match status" value="1"/>
</dbReference>
<dbReference type="HAMAP" id="MF_00365">
    <property type="entry name" value="RecF"/>
    <property type="match status" value="1"/>
</dbReference>
<dbReference type="InterPro" id="IPR001238">
    <property type="entry name" value="DNA-binding_RecF"/>
</dbReference>
<dbReference type="InterPro" id="IPR027417">
    <property type="entry name" value="P-loop_NTPase"/>
</dbReference>
<dbReference type="InterPro" id="IPR003395">
    <property type="entry name" value="RecF/RecN/SMC_N"/>
</dbReference>
<dbReference type="InterPro" id="IPR042174">
    <property type="entry name" value="RecF_2"/>
</dbReference>
<dbReference type="NCBIfam" id="TIGR00611">
    <property type="entry name" value="recf"/>
    <property type="match status" value="1"/>
</dbReference>
<dbReference type="PANTHER" id="PTHR32182">
    <property type="entry name" value="DNA REPLICATION AND REPAIR PROTEIN RECF"/>
    <property type="match status" value="1"/>
</dbReference>
<dbReference type="PANTHER" id="PTHR32182:SF0">
    <property type="entry name" value="DNA REPLICATION AND REPAIR PROTEIN RECF"/>
    <property type="match status" value="1"/>
</dbReference>
<dbReference type="Pfam" id="PF02463">
    <property type="entry name" value="SMC_N"/>
    <property type="match status" value="1"/>
</dbReference>
<dbReference type="SUPFAM" id="SSF52540">
    <property type="entry name" value="P-loop containing nucleoside triphosphate hydrolases"/>
    <property type="match status" value="1"/>
</dbReference>
<keyword id="KW-0067">ATP-binding</keyword>
<keyword id="KW-0963">Cytoplasm</keyword>
<keyword id="KW-0227">DNA damage</keyword>
<keyword id="KW-0234">DNA repair</keyword>
<keyword id="KW-0235">DNA replication</keyword>
<keyword id="KW-0238">DNA-binding</keyword>
<keyword id="KW-0547">Nucleotide-binding</keyword>
<keyword id="KW-0742">SOS response</keyword>
<feature type="chain" id="PRO_1000205478" description="DNA replication and repair protein RecF">
    <location>
        <begin position="1"/>
        <end position="377"/>
    </location>
</feature>
<feature type="binding site" evidence="1">
    <location>
        <begin position="30"/>
        <end position="37"/>
    </location>
    <ligand>
        <name>ATP</name>
        <dbReference type="ChEBI" id="CHEBI:30616"/>
    </ligand>
</feature>
<evidence type="ECO:0000255" key="1">
    <source>
        <dbReference type="HAMAP-Rule" id="MF_00365"/>
    </source>
</evidence>
<proteinExistence type="inferred from homology"/>
<organism>
    <name type="scientific">Colwellia psychrerythraea (strain 34H / ATCC BAA-681)</name>
    <name type="common">Vibrio psychroerythus</name>
    <dbReference type="NCBI Taxonomy" id="167879"/>
    <lineage>
        <taxon>Bacteria</taxon>
        <taxon>Pseudomonadati</taxon>
        <taxon>Pseudomonadota</taxon>
        <taxon>Gammaproteobacteria</taxon>
        <taxon>Alteromonadales</taxon>
        <taxon>Colwelliaceae</taxon>
        <taxon>Colwellia</taxon>
    </lineage>
</organism>
<gene>
    <name evidence="1" type="primary">recF</name>
    <name type="ordered locus">CPS_0003</name>
</gene>
<accession>Q48AS5</accession>
<sequence>MSVARLTTYNFRNLSSVAIDLHPKLNFFIGNNGSGKSSLLEALFFLGHGKSFRTSKVEHLACYETDNFVVSIKDVNDLQLGLSKNLQTGVTLIKINGERHARLSELAKNIAVQIVTPESFKLFFGGPKERRRFIELGMFHVKHDSSKQWREFNRVLKQRNACIRHNLDKATFDYWTGLFCQLSEQVAEVRSQYITNLISELPYWLEILLPNIADKVTVQYLQGWPQKKNLMDSLNDSHEREQAFGYSIYGAHKFDVKFLIAKQALESQLSRGQQKLFLLALTFAQAKLIARVNRVKPILLIDDIGAELDINSRESLSQALSILDCQVIITAIEEGVLQPFIDDVSVADKESSKKTKYHMFHVKHGGILPVNNSVKIE</sequence>
<name>RECF_COLP3</name>
<comment type="function">
    <text evidence="1">The RecF protein is involved in DNA metabolism; it is required for DNA replication and normal SOS inducibility. RecF binds preferentially to single-stranded, linear DNA. It also seems to bind ATP.</text>
</comment>
<comment type="subcellular location">
    <subcellularLocation>
        <location evidence="1">Cytoplasm</location>
    </subcellularLocation>
</comment>
<comment type="similarity">
    <text evidence="1">Belongs to the RecF family.</text>
</comment>